<feature type="chain" id="PRO_0000437114" description="Alcohol dehydrogenase patD">
    <location>
        <begin position="1"/>
        <end position="388"/>
    </location>
</feature>
<feature type="binding site" evidence="3">
    <location>
        <position position="46"/>
    </location>
    <ligand>
        <name>Zn(2+)</name>
        <dbReference type="ChEBI" id="CHEBI:29105"/>
        <label>1</label>
        <note>catalytic</note>
    </ligand>
</feature>
<feature type="binding site" evidence="3">
    <location>
        <position position="47"/>
    </location>
    <ligand>
        <name>NAD(+)</name>
        <dbReference type="ChEBI" id="CHEBI:57540"/>
    </ligand>
</feature>
<feature type="binding site" evidence="2">
    <location>
        <position position="67"/>
    </location>
    <ligand>
        <name>substrate</name>
    </ligand>
</feature>
<feature type="binding site" evidence="3">
    <location>
        <position position="67"/>
    </location>
    <ligand>
        <name>Zn(2+)</name>
        <dbReference type="ChEBI" id="CHEBI:29105"/>
        <label>1</label>
        <note>catalytic</note>
    </ligand>
</feature>
<feature type="binding site" evidence="3">
    <location>
        <position position="68"/>
    </location>
    <ligand>
        <name>Zn(2+)</name>
        <dbReference type="ChEBI" id="CHEBI:29105"/>
        <label>1</label>
        <note>catalytic</note>
    </ligand>
</feature>
<feature type="binding site" evidence="3">
    <location>
        <position position="101"/>
    </location>
    <ligand>
        <name>Zn(2+)</name>
        <dbReference type="ChEBI" id="CHEBI:29105"/>
        <label>2</label>
    </ligand>
</feature>
<feature type="binding site" evidence="3">
    <location>
        <position position="104"/>
    </location>
    <ligand>
        <name>Zn(2+)</name>
        <dbReference type="ChEBI" id="CHEBI:29105"/>
        <label>2</label>
    </ligand>
</feature>
<feature type="binding site" evidence="3">
    <location>
        <position position="112"/>
    </location>
    <ligand>
        <name>Zn(2+)</name>
        <dbReference type="ChEBI" id="CHEBI:29105"/>
        <label>2</label>
    </ligand>
</feature>
<feature type="binding site" evidence="3">
    <location>
        <begin position="198"/>
        <end position="203"/>
    </location>
    <ligand>
        <name>NAD(+)</name>
        <dbReference type="ChEBI" id="CHEBI:57540"/>
    </ligand>
</feature>
<feature type="binding site" evidence="3">
    <location>
        <begin position="295"/>
        <end position="297"/>
    </location>
    <ligand>
        <name>NAD(+)</name>
        <dbReference type="ChEBI" id="CHEBI:57540"/>
    </ligand>
</feature>
<feature type="binding site" evidence="3">
    <location>
        <begin position="320"/>
        <end position="322"/>
    </location>
    <ligand>
        <name>NAD(+)</name>
        <dbReference type="ChEBI" id="CHEBI:57540"/>
    </ligand>
</feature>
<keyword id="KW-0963">Cytoplasm</keyword>
<keyword id="KW-0479">Metal-binding</keyword>
<keyword id="KW-0520">NAD</keyword>
<keyword id="KW-0521">NADP</keyword>
<keyword id="KW-0560">Oxidoreductase</keyword>
<keyword id="KW-1185">Reference proteome</keyword>
<keyword id="KW-0862">Zinc</keyword>
<reference key="1">
    <citation type="journal article" date="2008" name="PLoS Genet.">
        <title>Genomic islands in the pathogenic filamentous fungus Aspergillus fumigatus.</title>
        <authorList>
            <person name="Fedorova N.D."/>
            <person name="Khaldi N."/>
            <person name="Joardar V.S."/>
            <person name="Maiti R."/>
            <person name="Amedeo P."/>
            <person name="Anderson M.J."/>
            <person name="Crabtree J."/>
            <person name="Silva J.C."/>
            <person name="Badger J.H."/>
            <person name="Albarraq A."/>
            <person name="Angiuoli S."/>
            <person name="Bussey H."/>
            <person name="Bowyer P."/>
            <person name="Cotty P.J."/>
            <person name="Dyer P.S."/>
            <person name="Egan A."/>
            <person name="Galens K."/>
            <person name="Fraser-Liggett C.M."/>
            <person name="Haas B.J."/>
            <person name="Inman J.M."/>
            <person name="Kent R."/>
            <person name="Lemieux S."/>
            <person name="Malavazi I."/>
            <person name="Orvis J."/>
            <person name="Roemer T."/>
            <person name="Ronning C.M."/>
            <person name="Sundaram J.P."/>
            <person name="Sutton G."/>
            <person name="Turner G."/>
            <person name="Venter J.C."/>
            <person name="White O.R."/>
            <person name="Whitty B.R."/>
            <person name="Youngman P."/>
            <person name="Wolfe K.H."/>
            <person name="Goldman G.H."/>
            <person name="Wortman J.R."/>
            <person name="Jiang B."/>
            <person name="Denning D.W."/>
            <person name="Nierman W.C."/>
        </authorList>
    </citation>
    <scope>NUCLEOTIDE SEQUENCE [LARGE SCALE GENOMIC DNA]</scope>
    <source>
        <strain>ATCC 1007 / CBS 513.65 / DSM 816 / NCTC 3887 / NRRL 1 / QM 1276 / 107</strain>
    </source>
</reference>
<reference key="2">
    <citation type="journal article" date="2004" name="Int. J. Epidemiol.">
        <title>Clinical trial of patulin in the common cold. 1944.</title>
        <authorList>
            <consortium name="Patulin Clinical Trials Committee, Medical Research Council"/>
        </authorList>
    </citation>
    <scope>BIOTECHNOLOGY</scope>
</reference>
<reference key="3">
    <citation type="journal article" date="2009" name="Microbiology">
        <title>Molecular cloning and functional characterization of two CYP619 cytochrome P450s involved in biosynthesis of patulin in Aspergillus clavatus.</title>
        <authorList>
            <person name="Artigot M.P."/>
            <person name="Loiseau N."/>
            <person name="Laffitte J."/>
            <person name="Mas-Reguieg L."/>
            <person name="Tadrist S."/>
            <person name="Oswald I.P."/>
            <person name="Puel O."/>
        </authorList>
    </citation>
    <scope>FUNCTION</scope>
</reference>
<reference key="4">
    <citation type="journal article" date="2012" name="Food Chem. Toxicol.">
        <title>DNA damage in organs of mice treated acutely with patulin, a known mycotoxin.</title>
        <authorList>
            <person name="de Melo F.T."/>
            <person name="de Oliveira I.M."/>
            <person name="Greggio S."/>
            <person name="Dacosta J.C."/>
            <person name="Guecheva T.N."/>
            <person name="Saffi J."/>
            <person name="Henriques J.A."/>
            <person name="Rosa R.M."/>
        </authorList>
    </citation>
    <scope>BIOTECHNOLOGY</scope>
</reference>
<reference key="5">
    <citation type="journal article" date="2016" name="Tumor Biol.">
        <title>The potential effect of patulin on mice bearing melanoma cells: an anti-tumour or carcinogenic effect?</title>
        <authorList>
            <person name="Boussabbeh M."/>
            <person name="Ben Salem I."/>
            <person name="Rjiba-Touati K."/>
            <person name="Bouyahya C."/>
            <person name="Neffati F."/>
            <person name="Najjar M.F."/>
            <person name="Bacha H."/>
            <person name="Abid-Essefi S."/>
        </authorList>
    </citation>
    <scope>BIOTECHNOLOGY</scope>
</reference>
<accession>A1CFL1</accession>
<sequence>MGSTLPTTYKRAFFEKQDATLTLEEVQLIEPQRGEILVKVEACGVCHSDHFAQMNLMGGGFPRVPGHEVVGRVAAVGDGETYWKIGDRTGAGWHGGHDGTCGACKKGLFQMCDNEQVNGITRDGGYAEYVLIRSEAAVRIPDHVNAAKYAPMLCAGVTVFNSIRQMNIPVGETVVIQGLGGLGHLALQYANRFGYRVVALSRGAQKEEFARKLGAHVYIDTSKEDPVAALQKLGGAALIVSTAPSPELINPLIEGLGVLGKLLILSIVGGIEVHTGLLVSERRIAIHRTNSIVRSLLTNSKVGKGKSIWSWPSGHATDSEEAIAFAELQGIDCLVEEFPLEKCNEAFGRSSSTTADRERVFLADFTGLTTTAAMMDGSVRFRAVITME</sequence>
<dbReference type="EC" id="1.1.1.-" evidence="1"/>
<dbReference type="EMBL" id="DS027052">
    <property type="protein sequence ID" value="EAW11660.1"/>
    <property type="molecule type" value="Genomic_DNA"/>
</dbReference>
<dbReference type="RefSeq" id="XP_001273086.1">
    <property type="nucleotide sequence ID" value="XM_001273085.1"/>
</dbReference>
<dbReference type="SMR" id="A1CFL1"/>
<dbReference type="STRING" id="344612.A1CFL1"/>
<dbReference type="EnsemblFungi" id="EAW11660">
    <property type="protein sequence ID" value="EAW11660"/>
    <property type="gene ID" value="ACLA_093590"/>
</dbReference>
<dbReference type="GeneID" id="4704848"/>
<dbReference type="KEGG" id="act:ACLA_093590"/>
<dbReference type="VEuPathDB" id="FungiDB:ACLA_093590"/>
<dbReference type="eggNOG" id="KOG0023">
    <property type="taxonomic scope" value="Eukaryota"/>
</dbReference>
<dbReference type="HOGENOM" id="CLU_026673_20_1_1"/>
<dbReference type="OMA" id="GGHDRTC"/>
<dbReference type="OrthoDB" id="1560166at2759"/>
<dbReference type="UniPathway" id="UPA00918"/>
<dbReference type="Proteomes" id="UP000006701">
    <property type="component" value="Unassembled WGS sequence"/>
</dbReference>
<dbReference type="GO" id="GO:0005829">
    <property type="term" value="C:cytosol"/>
    <property type="evidence" value="ECO:0000250"/>
    <property type="project" value="GO_Central"/>
</dbReference>
<dbReference type="GO" id="GO:0004022">
    <property type="term" value="F:alcohol dehydrogenase (NAD+) activity"/>
    <property type="evidence" value="ECO:0007669"/>
    <property type="project" value="TreeGrafter"/>
</dbReference>
<dbReference type="GO" id="GO:0046872">
    <property type="term" value="F:metal ion binding"/>
    <property type="evidence" value="ECO:0007669"/>
    <property type="project" value="UniProtKB-KW"/>
</dbReference>
<dbReference type="GO" id="GO:0016491">
    <property type="term" value="F:oxidoreductase activity"/>
    <property type="evidence" value="ECO:0000250"/>
    <property type="project" value="GO_Central"/>
</dbReference>
<dbReference type="GO" id="GO:0140723">
    <property type="term" value="P:patulin biosynthetic process"/>
    <property type="evidence" value="ECO:0000250"/>
    <property type="project" value="GO_Central"/>
</dbReference>
<dbReference type="FunFam" id="3.40.50.720:FF:000039">
    <property type="entry name" value="Alcohol dehydrogenase AdhP"/>
    <property type="match status" value="1"/>
</dbReference>
<dbReference type="Gene3D" id="3.90.180.10">
    <property type="entry name" value="Medium-chain alcohol dehydrogenases, catalytic domain"/>
    <property type="match status" value="1"/>
</dbReference>
<dbReference type="Gene3D" id="3.40.50.720">
    <property type="entry name" value="NAD(P)-binding Rossmann-like Domain"/>
    <property type="match status" value="1"/>
</dbReference>
<dbReference type="InterPro" id="IPR013149">
    <property type="entry name" value="ADH-like_C"/>
</dbReference>
<dbReference type="InterPro" id="IPR013154">
    <property type="entry name" value="ADH-like_N"/>
</dbReference>
<dbReference type="InterPro" id="IPR011032">
    <property type="entry name" value="GroES-like_sf"/>
</dbReference>
<dbReference type="InterPro" id="IPR036291">
    <property type="entry name" value="NAD(P)-bd_dom_sf"/>
</dbReference>
<dbReference type="InterPro" id="IPR020843">
    <property type="entry name" value="PKS_ER"/>
</dbReference>
<dbReference type="PANTHER" id="PTHR42940">
    <property type="entry name" value="ALCOHOL DEHYDROGENASE 1-RELATED"/>
    <property type="match status" value="1"/>
</dbReference>
<dbReference type="PANTHER" id="PTHR42940:SF7">
    <property type="entry name" value="ALCOHOL DEHYDROGENASE-LIKE N-TERMINAL DOMAIN-CONTAINING PROTEIN"/>
    <property type="match status" value="1"/>
</dbReference>
<dbReference type="Pfam" id="PF08240">
    <property type="entry name" value="ADH_N"/>
    <property type="match status" value="1"/>
</dbReference>
<dbReference type="Pfam" id="PF00107">
    <property type="entry name" value="ADH_zinc_N"/>
    <property type="match status" value="1"/>
</dbReference>
<dbReference type="SMART" id="SM00829">
    <property type="entry name" value="PKS_ER"/>
    <property type="match status" value="1"/>
</dbReference>
<dbReference type="SUPFAM" id="SSF50129">
    <property type="entry name" value="GroES-like"/>
    <property type="match status" value="1"/>
</dbReference>
<dbReference type="SUPFAM" id="SSF51735">
    <property type="entry name" value="NAD(P)-binding Rossmann-fold domains"/>
    <property type="match status" value="1"/>
</dbReference>
<proteinExistence type="evidence at protein level"/>
<gene>
    <name evidence="7" type="primary">patD</name>
    <name type="ORF">ACLA_093590</name>
</gene>
<comment type="function">
    <text evidence="1 9">Alcohol dehydrogenase; part of the gene cluster that mediates the biosynthesis of patulin, an acetate-derived tetraketide mycotoxin produced by several fungal species that shows antimicrobial properties against several bacteria (By similarity). PatD catalyzes the conversion of neopatulin into E-ascladiol (By similarity). The pathway begins with the synthesis of 6-methylsalicylic acid by the polyketide synthase (PKS) patK via condensation of acetate and malonate units. The 6-methylsalicylic acid decarboxylase patG then catalyzes the decarboxylation of 6-methylsalicylic acid to yield m-cresol (also known as 3-methylphenol). These first reactions occur in the cytosol. The intermediate m-cresol is then transported into the endoplasmic reticulum where the cytochrome P450 monooxygenase patH converts it to m-hydroxybenzyl alcohol, which is further converted to gentisyl alcohol by the cytochrome P450 monooxygenase patI. The oxidoreductases patJ and patO further convert gentisyl alcohol to isoepoxydon in the vacuole. PatN catalyzes then the transformation of isoepoxydon into phyllostine. The cluster protein patF is responsible for the conversion from phyllostine to neopatulin whereas the alcohol dehydrogenase patD converts neopatulin to E-ascladiol. The steps between isoepoxydon and E-ascladiol occur in the cytosol, and E-ascladiol is probably secreted to the extracellular space by one of the cluster-specific transporters patC or patM. Finally, the secreted patulin synthase patE catalyzes the conversion of E-ascladiol to patulin (Probable) (PubMed:19383676).</text>
</comment>
<comment type="catalytic activity">
    <reaction evidence="1">
        <text>neopatulin + NADPH + H(+) = (E)-ascladiol + NADP(+)</text>
        <dbReference type="Rhea" id="RHEA:62224"/>
        <dbReference type="ChEBI" id="CHEBI:15378"/>
        <dbReference type="ChEBI" id="CHEBI:57783"/>
        <dbReference type="ChEBI" id="CHEBI:58349"/>
        <dbReference type="ChEBI" id="CHEBI:145111"/>
        <dbReference type="ChEBI" id="CHEBI:145112"/>
    </reaction>
    <physiologicalReaction direction="left-to-right" evidence="1">
        <dbReference type="Rhea" id="RHEA:62225"/>
    </physiologicalReaction>
</comment>
<comment type="cofactor">
    <cofactor evidence="3">
        <name>Zn(2+)</name>
        <dbReference type="ChEBI" id="CHEBI:29105"/>
    </cofactor>
    <text evidence="3">Binds 2 Zn(2+) ions per subunit.</text>
</comment>
<comment type="pathway">
    <text evidence="9">Mycotoxin biosynthesis; patulin biosynthesis.</text>
</comment>
<comment type="subcellular location">
    <subcellularLocation>
        <location evidence="1">Cytoplasm</location>
        <location evidence="1">Cytosol</location>
    </subcellularLocation>
</comment>
<comment type="biotechnology">
    <text evidence="4 5 6">Patulin was originally used as an antibiotic and specifically trialed to be used against the common cold, but it is no longer used for that purpose since it has been shown to induce immunological, neurological and gastrointestinal effects (PubMed:15082620). Genotoxic effects of patulin with dose-dependent increase in DNA strand breaks in brain, liver and kidneys have been detected in mice (PubMed:22222931). However, more recently, it has been proposed that patulin might also have anti-tumor properties (PubMed:26619846).</text>
</comment>
<comment type="similarity">
    <text evidence="8">Belongs to the zinc-containing alcohol dehydrogenase family.</text>
</comment>
<protein>
    <recommendedName>
        <fullName evidence="7">Alcohol dehydrogenase patD</fullName>
        <ecNumber evidence="1">1.1.1.-</ecNumber>
    </recommendedName>
    <alternativeName>
        <fullName evidence="7">Patulin synthesis protein D</fullName>
    </alternativeName>
</protein>
<name>PATD_ASPCL</name>
<evidence type="ECO:0000250" key="1">
    <source>
        <dbReference type="UniProtKB" id="A0A075TMP0"/>
    </source>
</evidence>
<evidence type="ECO:0000250" key="2">
    <source>
        <dbReference type="UniProtKB" id="P00327"/>
    </source>
</evidence>
<evidence type="ECO:0000250" key="3">
    <source>
        <dbReference type="UniProtKB" id="Q96533"/>
    </source>
</evidence>
<evidence type="ECO:0000269" key="4">
    <source>
    </source>
</evidence>
<evidence type="ECO:0000269" key="5">
    <source>
    </source>
</evidence>
<evidence type="ECO:0000269" key="6">
    <source>
    </source>
</evidence>
<evidence type="ECO:0000303" key="7">
    <source>
    </source>
</evidence>
<evidence type="ECO:0000305" key="8"/>
<evidence type="ECO:0000305" key="9">
    <source>
    </source>
</evidence>
<organism>
    <name type="scientific">Aspergillus clavatus (strain ATCC 1007 / CBS 513.65 / DSM 816 / NCTC 3887 / NRRL 1 / QM 1276 / 107)</name>
    <dbReference type="NCBI Taxonomy" id="344612"/>
    <lineage>
        <taxon>Eukaryota</taxon>
        <taxon>Fungi</taxon>
        <taxon>Dikarya</taxon>
        <taxon>Ascomycota</taxon>
        <taxon>Pezizomycotina</taxon>
        <taxon>Eurotiomycetes</taxon>
        <taxon>Eurotiomycetidae</taxon>
        <taxon>Eurotiales</taxon>
        <taxon>Aspergillaceae</taxon>
        <taxon>Aspergillus</taxon>
        <taxon>Aspergillus subgen. Fumigati</taxon>
    </lineage>
</organism>